<protein>
    <recommendedName>
        <fullName>Uncharacterized gene 73 protein</fullName>
    </recommendedName>
</protein>
<name>VG73_ALHV1</name>
<feature type="chain" id="PRO_0000405736" description="Uncharacterized gene 73 protein">
    <location>
        <begin position="1"/>
        <end position="1300"/>
    </location>
</feature>
<feature type="region of interest" description="Disordered" evidence="1">
    <location>
        <begin position="1"/>
        <end position="1205"/>
    </location>
</feature>
<feature type="compositionally biased region" description="Basic residues" evidence="1">
    <location>
        <begin position="51"/>
        <end position="69"/>
    </location>
</feature>
<feature type="compositionally biased region" description="Gly residues" evidence="1">
    <location>
        <begin position="73"/>
        <end position="143"/>
    </location>
</feature>
<feature type="compositionally biased region" description="Basic residues" evidence="1">
    <location>
        <begin position="145"/>
        <end position="165"/>
    </location>
</feature>
<feature type="compositionally biased region" description="Low complexity" evidence="1">
    <location>
        <begin position="237"/>
        <end position="246"/>
    </location>
</feature>
<feature type="compositionally biased region" description="Acidic residues" evidence="1">
    <location>
        <begin position="250"/>
        <end position="270"/>
    </location>
</feature>
<feature type="compositionally biased region" description="Low complexity" evidence="1">
    <location>
        <begin position="280"/>
        <end position="289"/>
    </location>
</feature>
<feature type="compositionally biased region" description="Acidic residues" evidence="1">
    <location>
        <begin position="295"/>
        <end position="343"/>
    </location>
</feature>
<feature type="compositionally biased region" description="Acidic residues" evidence="1">
    <location>
        <begin position="357"/>
        <end position="417"/>
    </location>
</feature>
<feature type="compositionally biased region" description="Low complexity" evidence="1">
    <location>
        <begin position="418"/>
        <end position="427"/>
    </location>
</feature>
<feature type="compositionally biased region" description="Acidic residues" evidence="1">
    <location>
        <begin position="431"/>
        <end position="469"/>
    </location>
</feature>
<feature type="compositionally biased region" description="Acidic residues" evidence="1">
    <location>
        <begin position="477"/>
        <end position="494"/>
    </location>
</feature>
<feature type="compositionally biased region" description="Acidic residues" evidence="1">
    <location>
        <begin position="517"/>
        <end position="558"/>
    </location>
</feature>
<feature type="compositionally biased region" description="Acidic residues" evidence="1">
    <location>
        <begin position="581"/>
        <end position="630"/>
    </location>
</feature>
<feature type="compositionally biased region" description="Gly residues" evidence="1">
    <location>
        <begin position="674"/>
        <end position="686"/>
    </location>
</feature>
<feature type="compositionally biased region" description="Acidic residues" evidence="1">
    <location>
        <begin position="713"/>
        <end position="726"/>
    </location>
</feature>
<feature type="compositionally biased region" description="Acidic residues" evidence="1">
    <location>
        <begin position="736"/>
        <end position="749"/>
    </location>
</feature>
<feature type="compositionally biased region" description="Acidic residues" evidence="1">
    <location>
        <begin position="759"/>
        <end position="772"/>
    </location>
</feature>
<feature type="compositionally biased region" description="Acidic residues" evidence="1">
    <location>
        <begin position="820"/>
        <end position="883"/>
    </location>
</feature>
<feature type="compositionally biased region" description="Basic and acidic residues" evidence="1">
    <location>
        <begin position="903"/>
        <end position="917"/>
    </location>
</feature>
<feature type="compositionally biased region" description="Gly residues" evidence="1">
    <location>
        <begin position="922"/>
        <end position="1010"/>
    </location>
</feature>
<feature type="compositionally biased region" description="Gly residues" evidence="1">
    <location>
        <begin position="1021"/>
        <end position="1031"/>
    </location>
</feature>
<feature type="compositionally biased region" description="Basic residues" evidence="1">
    <location>
        <begin position="1183"/>
        <end position="1195"/>
    </location>
</feature>
<sequence length="1300" mass="128182">MVLLRSGLGTRPGEEDCDGGPSTRTRGHGPLGPNIKSAAGIGGKFPPSPQGRKRKKGPKKSGGKKKKRKVTGEGPGGGEGPGGGEGPGGGEGPGGGEGPGGGEGPGGGEVPGGGEVPGGGEGPGGGEGPGGGEGPGGGEGPGGNSRKRKRGDGSKKHGGKKKKKTTVTGEGGSGPEGPERDDPDGPGSQEGPKREEGPLGPDGPEGPEGPEGEGPEGLEGPKGEGPEGPEGPEGDSPDGPGAQEGPEGLEGPEGDEGPEGPEGPEGEGPEGPEGPKGDSPDGPGAQEGPEGPGGPDEDEGPEEPEGPEGEGPEGPEGEGPEGLEGPEGEGPEGPEGPEGDSPDGPDAQEGPEGPGGPDEDEGPEEPEGPEGEGPEGPEGPEGEGPEGPEGPEGEGPEGLEGPEGEGPEGPEGPEGDSPDGPGAQEGPEGPEGPEGEGPEGLEGPEGEGPEGPEGPEGEGPEGPEGPEGEGPERPEGPEGEGPEGPEGPEGEGPEGPEGPERDSPDGPGAQEGPEGPEGPEGEGPEGLEGPEGEGPEGPEGPEGEGPEGPEGPEGEGPEGPEGPERDSPDGPGAQEGPEGPEGPEEDEGPEGPEGPEGEGPEGPEGEGPEGLEGPEGDEGPEEPEGPEGDSPDGPGAQEVPEGPKGPEGECQSGPSSCEGQQVPKGPDGPEEGSSGPGSSEGEGPSGPGSSEGQQVPKGAEGSEGEGPCRPGGPDEDGDPEGPDGTEGEGPCGPGGPDEDGDPEGPDGTEGEGPCGPGGPDEDGDPEESEGTEDDIKVGLTELLGSMKLDSSDSDSDNSSDSANRRALEGVCGSHSSSKDSDDEEEEEEEEEEEEEEEEDDEEEEEDDEEEEEDDEEEEEDDEEEEEDDEEEEEDDEEEEEEEVIIITSSGEDGCGSSDVVCVGEEKGEGEKGKGREEDGGEGGEGGEGGEGGEGGEGGEGGEGGEGGEGGEGGEGGEGGEGGEGGEGGEGGEGGEGGEGGEGGEGGEGGEGGEGGEGGEGGEGGEGGEGGEGGERGKGGEGGEGGEGGEGGEGSEEDKKPFPCPRSPGVSGFYDLTWSSSDRSTEGSRGSPGPDDLDGRPGSQGPPTLSPQGFPGSGYGSNYDDDREPPVLSPQCGGPSGNEGDESDPDSSREPPDLSPQNPPEGDNGNESDSDPSYQPLGGSSSSSEDDDPGEGTSQGPPKRPPKHHPQTKRAQGKTLGLDPLYDPRQKAATFSLHLGCPTKDPLVRLSRMIRTLHPEGPHSSIFFTGGQYVVVFYVTSYFEAKKLKDFIIREQNRNPLQGRVNVSLARHYPPFPFPHE</sequence>
<gene>
    <name type="primary">73</name>
</gene>
<reference key="1">
    <citation type="journal article" date="1997" name="J. Virol.">
        <title>Primary structure of the alcelaphine herpesvirus 1 genome.</title>
        <authorList>
            <person name="Ensser A."/>
            <person name="Pflanz R."/>
            <person name="Fleckenstein B."/>
        </authorList>
    </citation>
    <scope>NUCLEOTIDE SEQUENCE [LARGE SCALE GENOMIC DNA]</scope>
</reference>
<organismHost>
    <name type="scientific">Connochaetes taurinus</name>
    <name type="common">Blue wildebeest</name>
    <dbReference type="NCBI Taxonomy" id="9927"/>
</organismHost>
<dbReference type="EMBL" id="AF005370">
    <property type="protein sequence ID" value="AAC58118.1"/>
    <property type="molecule type" value="Genomic_DNA"/>
</dbReference>
<dbReference type="PIR" id="T03166">
    <property type="entry name" value="T03166"/>
</dbReference>
<dbReference type="RefSeq" id="NP_065570.1">
    <property type="nucleotide sequence ID" value="NC_002531.1"/>
</dbReference>
<dbReference type="SMR" id="O36421"/>
<dbReference type="KEGG" id="vg:911773"/>
<dbReference type="Proteomes" id="UP000000941">
    <property type="component" value="Segment"/>
</dbReference>
<organism>
    <name type="scientific">Alcelaphine herpesvirus 1 (strain C500)</name>
    <name type="common">AlHV-1</name>
    <name type="synonym">Malignant catarrhal fever virus</name>
    <dbReference type="NCBI Taxonomy" id="654901"/>
    <lineage>
        <taxon>Viruses</taxon>
        <taxon>Duplodnaviria</taxon>
        <taxon>Heunggongvirae</taxon>
        <taxon>Peploviricota</taxon>
        <taxon>Herviviricetes</taxon>
        <taxon>Herpesvirales</taxon>
        <taxon>Orthoherpesviridae</taxon>
        <taxon>Gammaherpesvirinae</taxon>
        <taxon>Macavirus</taxon>
        <taxon>Macavirus alcelaphinegamma1</taxon>
    </lineage>
</organism>
<keyword id="KW-1185">Reference proteome</keyword>
<proteinExistence type="predicted"/>
<accession>O36421</accession>
<evidence type="ECO:0000256" key="1">
    <source>
        <dbReference type="SAM" id="MobiDB-lite"/>
    </source>
</evidence>